<keyword id="KW-0007">Acetylation</keyword>
<keyword id="KW-0030">Aminoacyl-tRNA synthetase</keyword>
<keyword id="KW-0067">ATP-binding</keyword>
<keyword id="KW-0436">Ligase</keyword>
<keyword id="KW-0472">Membrane</keyword>
<keyword id="KW-0496">Mitochondrion</keyword>
<keyword id="KW-0547">Nucleotide-binding</keyword>
<keyword id="KW-0648">Protein biosynthesis</keyword>
<keyword id="KW-1185">Reference proteome</keyword>
<keyword id="KW-0809">Transit peptide</keyword>
<gene>
    <name type="primary">RARS2</name>
    <name type="synonym">RARSL</name>
</gene>
<name>SYRM_PONAB</name>
<protein>
    <recommendedName>
        <fullName>Probable arginine--tRNA ligase, mitochondrial</fullName>
        <ecNumber evidence="3">6.1.1.19</ecNumber>
    </recommendedName>
    <alternativeName>
        <fullName>Arginyl-tRNA synthetase</fullName>
        <shortName>ArgRS</shortName>
    </alternativeName>
</protein>
<feature type="transit peptide" description="Mitochondrion" evidence="4">
    <location>
        <begin position="1"/>
        <end position="16"/>
    </location>
</feature>
<feature type="chain" id="PRO_0000250733" description="Probable arginine--tRNA ligase, mitochondrial">
    <location>
        <begin position="17"/>
        <end position="578"/>
    </location>
</feature>
<feature type="short sequence motif" description="'HIGH' region">
    <location>
        <begin position="133"/>
        <end position="144"/>
    </location>
</feature>
<feature type="binding site" evidence="1">
    <location>
        <begin position="133"/>
        <end position="135"/>
    </location>
    <ligand>
        <name>L-arginine</name>
        <dbReference type="ChEBI" id="CHEBI:32682"/>
    </ligand>
</feature>
<feature type="binding site" evidence="1">
    <location>
        <position position="144"/>
    </location>
    <ligand>
        <name>L-arginine</name>
        <dbReference type="ChEBI" id="CHEBI:32682"/>
    </ligand>
</feature>
<feature type="binding site" evidence="1">
    <location>
        <position position="322"/>
    </location>
    <ligand>
        <name>L-arginine</name>
        <dbReference type="ChEBI" id="CHEBI:32682"/>
    </ligand>
</feature>
<feature type="binding site" evidence="1">
    <location>
        <position position="326"/>
    </location>
    <ligand>
        <name>L-arginine</name>
        <dbReference type="ChEBI" id="CHEBI:32682"/>
    </ligand>
</feature>
<feature type="binding site" evidence="1">
    <location>
        <position position="350"/>
    </location>
    <ligand>
        <name>L-arginine</name>
        <dbReference type="ChEBI" id="CHEBI:32682"/>
    </ligand>
</feature>
<feature type="modified residue" description="N6-acetyllysine" evidence="2">
    <location>
        <position position="568"/>
    </location>
</feature>
<organism>
    <name type="scientific">Pongo abelii</name>
    <name type="common">Sumatran orangutan</name>
    <name type="synonym">Pongo pygmaeus abelii</name>
    <dbReference type="NCBI Taxonomy" id="9601"/>
    <lineage>
        <taxon>Eukaryota</taxon>
        <taxon>Metazoa</taxon>
        <taxon>Chordata</taxon>
        <taxon>Craniata</taxon>
        <taxon>Vertebrata</taxon>
        <taxon>Euteleostomi</taxon>
        <taxon>Mammalia</taxon>
        <taxon>Eutheria</taxon>
        <taxon>Euarchontoglires</taxon>
        <taxon>Primates</taxon>
        <taxon>Haplorrhini</taxon>
        <taxon>Catarrhini</taxon>
        <taxon>Hominidae</taxon>
        <taxon>Pongo</taxon>
    </lineage>
</organism>
<reference key="1">
    <citation type="submission" date="2004-11" db="EMBL/GenBank/DDBJ databases">
        <authorList>
            <consortium name="The German cDNA consortium"/>
        </authorList>
    </citation>
    <scope>NUCLEOTIDE SEQUENCE [LARGE SCALE MRNA]</scope>
    <source>
        <tissue>Heart</tissue>
    </source>
</reference>
<evidence type="ECO:0000250" key="1">
    <source>
        <dbReference type="UniProtKB" id="P54136"/>
    </source>
</evidence>
<evidence type="ECO:0000250" key="2">
    <source>
        <dbReference type="UniProtKB" id="Q3U186"/>
    </source>
</evidence>
<evidence type="ECO:0000250" key="3">
    <source>
        <dbReference type="UniProtKB" id="Q5T160"/>
    </source>
</evidence>
<evidence type="ECO:0000255" key="4"/>
<evidence type="ECO:0000305" key="5"/>
<proteinExistence type="evidence at transcript level"/>
<dbReference type="EC" id="6.1.1.19" evidence="3"/>
<dbReference type="EMBL" id="CR857556">
    <property type="protein sequence ID" value="CAH89834.1"/>
    <property type="molecule type" value="mRNA"/>
</dbReference>
<dbReference type="RefSeq" id="NP_001128754.1">
    <property type="nucleotide sequence ID" value="NM_001135282.1"/>
</dbReference>
<dbReference type="SMR" id="Q5REH3"/>
<dbReference type="FunCoup" id="Q5REH3">
    <property type="interactions" value="2146"/>
</dbReference>
<dbReference type="STRING" id="9601.ENSPPYP00000018841"/>
<dbReference type="GeneID" id="100189650"/>
<dbReference type="KEGG" id="pon:100189650"/>
<dbReference type="CTD" id="57038"/>
<dbReference type="eggNOG" id="KOG1195">
    <property type="taxonomic scope" value="Eukaryota"/>
</dbReference>
<dbReference type="InParanoid" id="Q5REH3"/>
<dbReference type="OrthoDB" id="68056at2759"/>
<dbReference type="Proteomes" id="UP000001595">
    <property type="component" value="Unplaced"/>
</dbReference>
<dbReference type="GO" id="GO:0031966">
    <property type="term" value="C:mitochondrial membrane"/>
    <property type="evidence" value="ECO:0000250"/>
    <property type="project" value="UniProtKB"/>
</dbReference>
<dbReference type="GO" id="GO:0004814">
    <property type="term" value="F:arginine-tRNA ligase activity"/>
    <property type="evidence" value="ECO:0000250"/>
    <property type="project" value="UniProtKB"/>
</dbReference>
<dbReference type="GO" id="GO:0005524">
    <property type="term" value="F:ATP binding"/>
    <property type="evidence" value="ECO:0007669"/>
    <property type="project" value="UniProtKB-KW"/>
</dbReference>
<dbReference type="GO" id="GO:0006420">
    <property type="term" value="P:arginyl-tRNA aminoacylation"/>
    <property type="evidence" value="ECO:0007669"/>
    <property type="project" value="InterPro"/>
</dbReference>
<dbReference type="GO" id="GO:0032543">
    <property type="term" value="P:mitochondrial translation"/>
    <property type="evidence" value="ECO:0007669"/>
    <property type="project" value="TreeGrafter"/>
</dbReference>
<dbReference type="CDD" id="cd00671">
    <property type="entry name" value="ArgRS_core"/>
    <property type="match status" value="1"/>
</dbReference>
<dbReference type="FunFam" id="1.10.730.10:FF:000006">
    <property type="entry name" value="Arginyl-tRNA synthetase 2, mitochondrial"/>
    <property type="match status" value="1"/>
</dbReference>
<dbReference type="FunFam" id="3.40.50.620:FF:000058">
    <property type="entry name" value="Mitochondrial arginyl-tRNA synthetase"/>
    <property type="match status" value="1"/>
</dbReference>
<dbReference type="FunFam" id="3.30.1360.70:FF:000004">
    <property type="entry name" value="Probable arginine--tRNA ligase, mitochondrial"/>
    <property type="match status" value="1"/>
</dbReference>
<dbReference type="Gene3D" id="3.30.1360.70">
    <property type="entry name" value="Arginyl tRNA synthetase N-terminal domain"/>
    <property type="match status" value="1"/>
</dbReference>
<dbReference type="Gene3D" id="3.40.50.620">
    <property type="entry name" value="HUPs"/>
    <property type="match status" value="1"/>
</dbReference>
<dbReference type="Gene3D" id="1.10.730.10">
    <property type="entry name" value="Isoleucyl-tRNA Synthetase, Domain 1"/>
    <property type="match status" value="1"/>
</dbReference>
<dbReference type="InterPro" id="IPR001412">
    <property type="entry name" value="aa-tRNA-synth_I_CS"/>
</dbReference>
<dbReference type="InterPro" id="IPR001278">
    <property type="entry name" value="Arg-tRNA-ligase"/>
</dbReference>
<dbReference type="InterPro" id="IPR036695">
    <property type="entry name" value="Arg-tRNA-synth_N_sf"/>
</dbReference>
<dbReference type="InterPro" id="IPR035684">
    <property type="entry name" value="ArgRS_core"/>
</dbReference>
<dbReference type="InterPro" id="IPR008909">
    <property type="entry name" value="DALR_anticod-bd"/>
</dbReference>
<dbReference type="InterPro" id="IPR014729">
    <property type="entry name" value="Rossmann-like_a/b/a_fold"/>
</dbReference>
<dbReference type="InterPro" id="IPR009080">
    <property type="entry name" value="tRNAsynth_Ia_anticodon-bd"/>
</dbReference>
<dbReference type="NCBIfam" id="TIGR00456">
    <property type="entry name" value="argS"/>
    <property type="match status" value="1"/>
</dbReference>
<dbReference type="PANTHER" id="PTHR11956:SF11">
    <property type="entry name" value="ARGININE--TRNA LIGASE, MITOCHONDRIAL-RELATED"/>
    <property type="match status" value="1"/>
</dbReference>
<dbReference type="PANTHER" id="PTHR11956">
    <property type="entry name" value="ARGINYL-TRNA SYNTHETASE"/>
    <property type="match status" value="1"/>
</dbReference>
<dbReference type="Pfam" id="PF05746">
    <property type="entry name" value="DALR_1"/>
    <property type="match status" value="1"/>
</dbReference>
<dbReference type="Pfam" id="PF00750">
    <property type="entry name" value="tRNA-synt_1d"/>
    <property type="match status" value="1"/>
</dbReference>
<dbReference type="PRINTS" id="PR01038">
    <property type="entry name" value="TRNASYNTHARG"/>
</dbReference>
<dbReference type="SMART" id="SM00836">
    <property type="entry name" value="DALR_1"/>
    <property type="match status" value="1"/>
</dbReference>
<dbReference type="SUPFAM" id="SSF47323">
    <property type="entry name" value="Anticodon-binding domain of a subclass of class I aminoacyl-tRNA synthetases"/>
    <property type="match status" value="1"/>
</dbReference>
<dbReference type="SUPFAM" id="SSF55190">
    <property type="entry name" value="Arginyl-tRNA synthetase (ArgRS), N-terminal 'additional' domain"/>
    <property type="match status" value="1"/>
</dbReference>
<dbReference type="SUPFAM" id="SSF52374">
    <property type="entry name" value="Nucleotidylyl transferase"/>
    <property type="match status" value="1"/>
</dbReference>
<dbReference type="PROSITE" id="PS00178">
    <property type="entry name" value="AA_TRNA_LIGASE_I"/>
    <property type="match status" value="1"/>
</dbReference>
<accession>Q5REH3</accession>
<sequence>MACGFRRAIACQLSRVLNLPPENLITSISAVPISQKEEVADFQLSVDSLLEKDNDHSRPDIQVQAKRLAEKLRCDTVVSEISTGQRTVNFKINRELLTKTVLQQVIEDGSKYGLKSELFSGLPQKKIVVEFSSPNVAKKFHVGHLRSTIIGNFIANLKEALGHQVIRINYLGDWGMQFGLLGTGFQLFGYEEKLQSNPLQHLFEVYVQVNKEAADDKSVAKAAQEFFQRLELGDVQALSLWQKFRDLSIEEYIRVYKRLGVYFDEYSGESFYREKSQEVLKLLESKGLLLRTIKGTAVVDLSGNGDPSSICTVMRSDGTSLYATRDLAAAIDRMDKYNFDTMIYVTDKGQKKHFQQVFQMLKIMGYDWAERCQHVPFGVVQGMKTRRGDVTFLEDVLNEIQLRMLQNMASIKTTKELKNPQETAERVGLAALIIQDFKGLLLSDYKFSWDRVFQSRGDTGVFLQYTHARLHSLEETFGCGYLNDFNTACLQEPQSVSILQHLLRFDEVLYKSSQDFQPRHIVSYLLTLSHLAAVAHKTLQIKDSPPEVAGARLHLFKAVRSVLANGMKLLGITPVCRM</sequence>
<comment type="function">
    <text evidence="3">Catalyzes the attachment of arginine to tRNA(Arg) in a two-step reaction: arginine is first activated by ATP to form Arg-AMP and then transferred to the acceptor end of tRNA(Arg).</text>
</comment>
<comment type="catalytic activity">
    <reaction evidence="3">
        <text>tRNA(Arg) + L-arginine + ATP = L-arginyl-tRNA(Arg) + AMP + diphosphate</text>
        <dbReference type="Rhea" id="RHEA:20301"/>
        <dbReference type="Rhea" id="RHEA-COMP:9658"/>
        <dbReference type="Rhea" id="RHEA-COMP:9673"/>
        <dbReference type="ChEBI" id="CHEBI:30616"/>
        <dbReference type="ChEBI" id="CHEBI:32682"/>
        <dbReference type="ChEBI" id="CHEBI:33019"/>
        <dbReference type="ChEBI" id="CHEBI:78442"/>
        <dbReference type="ChEBI" id="CHEBI:78513"/>
        <dbReference type="ChEBI" id="CHEBI:456215"/>
        <dbReference type="EC" id="6.1.1.19"/>
    </reaction>
</comment>
<comment type="subcellular location">
    <subcellularLocation>
        <location evidence="3">Mitochondrion membrane</location>
    </subcellularLocation>
</comment>
<comment type="similarity">
    <text evidence="5">Belongs to the class-I aminoacyl-tRNA synthetase family.</text>
</comment>